<protein>
    <recommendedName>
        <fullName evidence="2">Replication restart protein DnaT</fullName>
    </recommendedName>
</protein>
<accession>Q8FA72</accession>
<keyword id="KW-0235">DNA replication</keyword>
<keyword id="KW-0238">DNA-binding</keyword>
<keyword id="KW-0639">Primosome</keyword>
<keyword id="KW-1185">Reference proteome</keyword>
<organism>
    <name type="scientific">Escherichia coli O6:H1 (strain CFT073 / ATCC 700928 / UPEC)</name>
    <dbReference type="NCBI Taxonomy" id="199310"/>
    <lineage>
        <taxon>Bacteria</taxon>
        <taxon>Pseudomonadati</taxon>
        <taxon>Pseudomonadota</taxon>
        <taxon>Gammaproteobacteria</taxon>
        <taxon>Enterobacterales</taxon>
        <taxon>Enterobacteriaceae</taxon>
        <taxon>Escherichia</taxon>
    </lineage>
</organism>
<evidence type="ECO:0000250" key="1"/>
<evidence type="ECO:0000255" key="2">
    <source>
        <dbReference type="HAMAP-Rule" id="MF_01061"/>
    </source>
</evidence>
<evidence type="ECO:0000256" key="3">
    <source>
        <dbReference type="SAM" id="MobiDB-lite"/>
    </source>
</evidence>
<dbReference type="EMBL" id="AE014075">
    <property type="protein sequence ID" value="AAN83861.1"/>
    <property type="molecule type" value="Genomic_DNA"/>
</dbReference>
<dbReference type="RefSeq" id="WP_000098826.1">
    <property type="nucleotide sequence ID" value="NZ_CP051263.1"/>
</dbReference>
<dbReference type="SMR" id="Q8FA72"/>
<dbReference type="STRING" id="199310.c5441"/>
<dbReference type="KEGG" id="ecc:c5441"/>
<dbReference type="eggNOG" id="ENOG502Z8PW">
    <property type="taxonomic scope" value="Bacteria"/>
</dbReference>
<dbReference type="HOGENOM" id="CLU_1501592_0_0_6"/>
<dbReference type="BioCyc" id="ECOL199310:C5441-MONOMER"/>
<dbReference type="Proteomes" id="UP000001410">
    <property type="component" value="Chromosome"/>
</dbReference>
<dbReference type="GO" id="GO:1990077">
    <property type="term" value="C:primosome complex"/>
    <property type="evidence" value="ECO:0007669"/>
    <property type="project" value="UniProtKB-KW"/>
</dbReference>
<dbReference type="GO" id="GO:0006269">
    <property type="term" value="P:DNA replication, synthesis of primer"/>
    <property type="evidence" value="ECO:0007669"/>
    <property type="project" value="UniProtKB-UniRule"/>
</dbReference>
<dbReference type="Gene3D" id="1.10.8.1180">
    <property type="match status" value="1"/>
</dbReference>
<dbReference type="HAMAP" id="MF_01061">
    <property type="entry name" value="DnaT"/>
    <property type="match status" value="1"/>
</dbReference>
<dbReference type="InterPro" id="IPR020917">
    <property type="entry name" value="DnaT"/>
</dbReference>
<dbReference type="InterPro" id="IPR040480">
    <property type="entry name" value="DnaT_DNA_bind"/>
</dbReference>
<dbReference type="NCBIfam" id="NF002770">
    <property type="entry name" value="PRK02854.1"/>
    <property type="match status" value="1"/>
</dbReference>
<dbReference type="Pfam" id="PF17948">
    <property type="entry name" value="DnaT"/>
    <property type="match status" value="1"/>
</dbReference>
<gene>
    <name evidence="2" type="primary">dnaT</name>
    <name type="ordered locus">c5441</name>
</gene>
<reference key="1">
    <citation type="journal article" date="2002" name="Proc. Natl. Acad. Sci. U.S.A.">
        <title>Extensive mosaic structure revealed by the complete genome sequence of uropathogenic Escherichia coli.</title>
        <authorList>
            <person name="Welch R.A."/>
            <person name="Burland V."/>
            <person name="Plunkett G. III"/>
            <person name="Redford P."/>
            <person name="Roesch P."/>
            <person name="Rasko D."/>
            <person name="Buckles E.L."/>
            <person name="Liou S.-R."/>
            <person name="Boutin A."/>
            <person name="Hackett J."/>
            <person name="Stroud D."/>
            <person name="Mayhew G.F."/>
            <person name="Rose D.J."/>
            <person name="Zhou S."/>
            <person name="Schwartz D.C."/>
            <person name="Perna N.T."/>
            <person name="Mobley H.L.T."/>
            <person name="Donnenberg M.S."/>
            <person name="Blattner F.R."/>
        </authorList>
    </citation>
    <scope>NUCLEOTIDE SEQUENCE [LARGE SCALE GENOMIC DNA]</scope>
    <source>
        <strain>CFT073 / ATCC 700928 / UPEC</strain>
    </source>
</reference>
<feature type="initiator methionine" description="Removed" evidence="1">
    <location>
        <position position="1"/>
    </location>
</feature>
<feature type="chain" id="PRO_0000199871" description="Replication restart protein DnaT">
    <location>
        <begin position="2"/>
        <end position="179"/>
    </location>
</feature>
<feature type="region of interest" description="Disordered" evidence="3">
    <location>
        <begin position="156"/>
        <end position="179"/>
    </location>
</feature>
<proteinExistence type="inferred from homology"/>
<name>DNAT_ECOL6</name>
<sequence>MSSRVLTPDVVGIDALVHDHQTVLAKAEGGVVAVFDNNAPAFYAVTPARLAELLALEEKLARPGSDVALDDQLYQEPQTAPVAVPMGKFAMYPDWQPDADFIRLAALWGVALREPVTAEELASFIAYWQAEGKVFHHVQWQQKLARSLQIGRASNGGLPKRDVNTVSEPDSQIPPGFRG</sequence>
<comment type="function">
    <text evidence="2">Involved in the restart of stalled replication forks, which reloads the replicative helicase on sites other than the origin of replication. Can function in multiple replication restart pathways. Displaces ssDNA from a PriB-ssDNA complex. Probably forms a spiral filament on ssDNA.</text>
</comment>
<comment type="subunit">
    <text evidence="2">Homooligomerizes. Interacts with PriB. Component of the replication restart primosome. Primosome assembly occurs via a 'hand-off' mechanism. PriA binds to replication forks, subsequently PriB then DnaT bind; DnaT then displaces ssDNA to generate the helicase loading substrate.</text>
</comment>
<comment type="similarity">
    <text evidence="2">Belongs to the DnaT family.</text>
</comment>